<feature type="chain" id="PRO_1000122083" description="Exodeoxyribonuclease 7 large subunit">
    <location>
        <begin position="1"/>
        <end position="449"/>
    </location>
</feature>
<proteinExistence type="inferred from homology"/>
<keyword id="KW-0963">Cytoplasm</keyword>
<keyword id="KW-0269">Exonuclease</keyword>
<keyword id="KW-0378">Hydrolase</keyword>
<keyword id="KW-0540">Nuclease</keyword>
<name>EX7L_SALG2</name>
<gene>
    <name evidence="1" type="primary">xseA</name>
    <name type="ordered locus">SG2544</name>
</gene>
<organism>
    <name type="scientific">Salmonella gallinarum (strain 287/91 / NCTC 13346)</name>
    <dbReference type="NCBI Taxonomy" id="550538"/>
    <lineage>
        <taxon>Bacteria</taxon>
        <taxon>Pseudomonadati</taxon>
        <taxon>Pseudomonadota</taxon>
        <taxon>Gammaproteobacteria</taxon>
        <taxon>Enterobacterales</taxon>
        <taxon>Enterobacteriaceae</taxon>
        <taxon>Salmonella</taxon>
    </lineage>
</organism>
<comment type="function">
    <text evidence="1">Bidirectionally degrades single-stranded DNA into large acid-insoluble oligonucleotides, which are then degraded further into small acid-soluble oligonucleotides.</text>
</comment>
<comment type="catalytic activity">
    <reaction evidence="1">
        <text>Exonucleolytic cleavage in either 5'- to 3'- or 3'- to 5'-direction to yield nucleoside 5'-phosphates.</text>
        <dbReference type="EC" id="3.1.11.6"/>
    </reaction>
</comment>
<comment type="subunit">
    <text evidence="1">Heterooligomer composed of large and small subunits.</text>
</comment>
<comment type="subcellular location">
    <subcellularLocation>
        <location evidence="1">Cytoplasm</location>
    </subcellularLocation>
</comment>
<comment type="similarity">
    <text evidence="1">Belongs to the XseA family.</text>
</comment>
<accession>B5RCY1</accession>
<sequence length="449" mass="50667">MLSSQTSSIFTVSRLNQTVRLLLEQEMGQVWISGEISNFTQPASGHWYFTLKDDTAQVRCAMFRNSNRRVTFRPQHGQQVLVRANITLYEPRGDYQIIAESMQPAGEGLLQQKYEQLKAKLQAEGLFDQQHKQPLPSPAHCVGVITSKTGAALHDILHVLKRRDPSLPVIIYPTAVQGDDAPGQIVRAIELANARGECDVLIVGRGGGSLEDLWSFNDERVARAIFASRIPVVSAVGHETDVTIADFVADLRAPTPSAAAEIVSRNQQELLRQIQSAQQRLGMAMDYYLANRSRRFTQIFHRLQQQHPQLRLARQQTALERLRQRMGFALEARIKQANQRQQRVSQRLSQQNPQPRIHRAQSRIQQLEYRLTENIRSRLSEQRERFGNAVTHLEAVSPLATLARGYTVSTTTDGKVLKKIKQVKAGDIMTTRLEDGWLESEVKSVTPGT</sequence>
<reference key="1">
    <citation type="journal article" date="2008" name="Genome Res.">
        <title>Comparative genome analysis of Salmonella enteritidis PT4 and Salmonella gallinarum 287/91 provides insights into evolutionary and host adaptation pathways.</title>
        <authorList>
            <person name="Thomson N.R."/>
            <person name="Clayton D.J."/>
            <person name="Windhorst D."/>
            <person name="Vernikos G."/>
            <person name="Davidson S."/>
            <person name="Churcher C."/>
            <person name="Quail M.A."/>
            <person name="Stevens M."/>
            <person name="Jones M.A."/>
            <person name="Watson M."/>
            <person name="Barron A."/>
            <person name="Layton A."/>
            <person name="Pickard D."/>
            <person name="Kingsley R.A."/>
            <person name="Bignell A."/>
            <person name="Clark L."/>
            <person name="Harris B."/>
            <person name="Ormond D."/>
            <person name="Abdellah Z."/>
            <person name="Brooks K."/>
            <person name="Cherevach I."/>
            <person name="Chillingworth T."/>
            <person name="Woodward J."/>
            <person name="Norberczak H."/>
            <person name="Lord A."/>
            <person name="Arrowsmith C."/>
            <person name="Jagels K."/>
            <person name="Moule S."/>
            <person name="Mungall K."/>
            <person name="Saunders M."/>
            <person name="Whitehead S."/>
            <person name="Chabalgoity J.A."/>
            <person name="Maskell D."/>
            <person name="Humphreys T."/>
            <person name="Roberts M."/>
            <person name="Barrow P.A."/>
            <person name="Dougan G."/>
            <person name="Parkhill J."/>
        </authorList>
    </citation>
    <scope>NUCLEOTIDE SEQUENCE [LARGE SCALE GENOMIC DNA]</scope>
    <source>
        <strain>287/91 / NCTC 13346</strain>
    </source>
</reference>
<protein>
    <recommendedName>
        <fullName evidence="1">Exodeoxyribonuclease 7 large subunit</fullName>
        <ecNumber evidence="1">3.1.11.6</ecNumber>
    </recommendedName>
    <alternativeName>
        <fullName evidence="1">Exodeoxyribonuclease VII large subunit</fullName>
        <shortName evidence="1">Exonuclease VII large subunit</shortName>
    </alternativeName>
</protein>
<dbReference type="EC" id="3.1.11.6" evidence="1"/>
<dbReference type="EMBL" id="AM933173">
    <property type="protein sequence ID" value="CAR38367.1"/>
    <property type="molecule type" value="Genomic_DNA"/>
</dbReference>
<dbReference type="RefSeq" id="WP_000953167.1">
    <property type="nucleotide sequence ID" value="NC_011274.1"/>
</dbReference>
<dbReference type="SMR" id="B5RCY1"/>
<dbReference type="KEGG" id="seg:SG2544"/>
<dbReference type="HOGENOM" id="CLU_023625_3_1_6"/>
<dbReference type="Proteomes" id="UP000008321">
    <property type="component" value="Chromosome"/>
</dbReference>
<dbReference type="GO" id="GO:0005737">
    <property type="term" value="C:cytoplasm"/>
    <property type="evidence" value="ECO:0007669"/>
    <property type="project" value="UniProtKB-SubCell"/>
</dbReference>
<dbReference type="GO" id="GO:0009318">
    <property type="term" value="C:exodeoxyribonuclease VII complex"/>
    <property type="evidence" value="ECO:0007669"/>
    <property type="project" value="InterPro"/>
</dbReference>
<dbReference type="GO" id="GO:0008855">
    <property type="term" value="F:exodeoxyribonuclease VII activity"/>
    <property type="evidence" value="ECO:0007669"/>
    <property type="project" value="UniProtKB-UniRule"/>
</dbReference>
<dbReference type="GO" id="GO:0003676">
    <property type="term" value="F:nucleic acid binding"/>
    <property type="evidence" value="ECO:0007669"/>
    <property type="project" value="InterPro"/>
</dbReference>
<dbReference type="GO" id="GO:0006308">
    <property type="term" value="P:DNA catabolic process"/>
    <property type="evidence" value="ECO:0007669"/>
    <property type="project" value="UniProtKB-UniRule"/>
</dbReference>
<dbReference type="CDD" id="cd04489">
    <property type="entry name" value="ExoVII_LU_OBF"/>
    <property type="match status" value="1"/>
</dbReference>
<dbReference type="HAMAP" id="MF_00378">
    <property type="entry name" value="Exonuc_7_L"/>
    <property type="match status" value="1"/>
</dbReference>
<dbReference type="InterPro" id="IPR003753">
    <property type="entry name" value="Exonuc_VII_L"/>
</dbReference>
<dbReference type="InterPro" id="IPR020579">
    <property type="entry name" value="Exonuc_VII_lsu_C"/>
</dbReference>
<dbReference type="InterPro" id="IPR025824">
    <property type="entry name" value="OB-fold_nuc-bd_dom"/>
</dbReference>
<dbReference type="NCBIfam" id="TIGR00237">
    <property type="entry name" value="xseA"/>
    <property type="match status" value="1"/>
</dbReference>
<dbReference type="PANTHER" id="PTHR30008">
    <property type="entry name" value="EXODEOXYRIBONUCLEASE 7 LARGE SUBUNIT"/>
    <property type="match status" value="1"/>
</dbReference>
<dbReference type="PANTHER" id="PTHR30008:SF0">
    <property type="entry name" value="EXODEOXYRIBONUCLEASE 7 LARGE SUBUNIT"/>
    <property type="match status" value="1"/>
</dbReference>
<dbReference type="Pfam" id="PF02601">
    <property type="entry name" value="Exonuc_VII_L"/>
    <property type="match status" value="1"/>
</dbReference>
<dbReference type="Pfam" id="PF13742">
    <property type="entry name" value="tRNA_anti_2"/>
    <property type="match status" value="1"/>
</dbReference>
<evidence type="ECO:0000255" key="1">
    <source>
        <dbReference type="HAMAP-Rule" id="MF_00378"/>
    </source>
</evidence>